<gene>
    <name evidence="1" type="primary">thyA</name>
    <name type="ordered locus">BT_1568</name>
</gene>
<proteinExistence type="inferred from homology"/>
<organism>
    <name type="scientific">Bartonella tribocorum (strain CIP 105476 / IBS 506)</name>
    <dbReference type="NCBI Taxonomy" id="382640"/>
    <lineage>
        <taxon>Bacteria</taxon>
        <taxon>Pseudomonadati</taxon>
        <taxon>Pseudomonadota</taxon>
        <taxon>Alphaproteobacteria</taxon>
        <taxon>Hyphomicrobiales</taxon>
        <taxon>Bartonellaceae</taxon>
        <taxon>Bartonella</taxon>
    </lineage>
</organism>
<comment type="function">
    <text evidence="1">Catalyzes the reductive methylation of 2'-deoxyuridine-5'-monophosphate (dUMP) to 2'-deoxythymidine-5'-monophosphate (dTMP) while utilizing 5,10-methylenetetrahydrofolate (mTHF) as the methyl donor and reductant in the reaction, yielding dihydrofolate (DHF) as a by-product. This enzymatic reaction provides an intracellular de novo source of dTMP, an essential precursor for DNA biosynthesis.</text>
</comment>
<comment type="catalytic activity">
    <reaction evidence="1">
        <text>dUMP + (6R)-5,10-methylene-5,6,7,8-tetrahydrofolate = 7,8-dihydrofolate + dTMP</text>
        <dbReference type="Rhea" id="RHEA:12104"/>
        <dbReference type="ChEBI" id="CHEBI:15636"/>
        <dbReference type="ChEBI" id="CHEBI:57451"/>
        <dbReference type="ChEBI" id="CHEBI:63528"/>
        <dbReference type="ChEBI" id="CHEBI:246422"/>
        <dbReference type="EC" id="2.1.1.45"/>
    </reaction>
</comment>
<comment type="pathway">
    <text evidence="1">Pyrimidine metabolism; dTTP biosynthesis.</text>
</comment>
<comment type="subunit">
    <text evidence="1">Homodimer.</text>
</comment>
<comment type="subcellular location">
    <subcellularLocation>
        <location evidence="1">Cytoplasm</location>
    </subcellularLocation>
</comment>
<comment type="similarity">
    <text evidence="1">Belongs to the thymidylate synthase family. Bacterial-type ThyA subfamily.</text>
</comment>
<feature type="chain" id="PRO_1000073868" description="Thymidylate synthase">
    <location>
        <begin position="1"/>
        <end position="264"/>
    </location>
</feature>
<feature type="active site" description="Nucleophile" evidence="1">
    <location>
        <position position="146"/>
    </location>
</feature>
<feature type="binding site" description="in other chain" evidence="1">
    <location>
        <position position="21"/>
    </location>
    <ligand>
        <name>dUMP</name>
        <dbReference type="ChEBI" id="CHEBI:246422"/>
        <note>ligand shared between dimeric partners</note>
    </ligand>
</feature>
<feature type="binding site" evidence="1">
    <location>
        <position position="51"/>
    </location>
    <ligand>
        <name>(6R)-5,10-methylene-5,6,7,8-tetrahydrofolate</name>
        <dbReference type="ChEBI" id="CHEBI:15636"/>
    </ligand>
</feature>
<feature type="binding site" evidence="1">
    <location>
        <begin position="126"/>
        <end position="127"/>
    </location>
    <ligand>
        <name>dUMP</name>
        <dbReference type="ChEBI" id="CHEBI:246422"/>
        <note>ligand shared between dimeric partners</note>
    </ligand>
</feature>
<feature type="binding site" description="in other chain" evidence="1">
    <location>
        <begin position="166"/>
        <end position="169"/>
    </location>
    <ligand>
        <name>dUMP</name>
        <dbReference type="ChEBI" id="CHEBI:246422"/>
        <note>ligand shared between dimeric partners</note>
    </ligand>
</feature>
<feature type="binding site" evidence="1">
    <location>
        <position position="169"/>
    </location>
    <ligand>
        <name>(6R)-5,10-methylene-5,6,7,8-tetrahydrofolate</name>
        <dbReference type="ChEBI" id="CHEBI:15636"/>
    </ligand>
</feature>
<feature type="binding site" description="in other chain" evidence="1">
    <location>
        <position position="177"/>
    </location>
    <ligand>
        <name>dUMP</name>
        <dbReference type="ChEBI" id="CHEBI:246422"/>
        <note>ligand shared between dimeric partners</note>
    </ligand>
</feature>
<feature type="binding site" description="in other chain" evidence="1">
    <location>
        <begin position="207"/>
        <end position="209"/>
    </location>
    <ligand>
        <name>dUMP</name>
        <dbReference type="ChEBI" id="CHEBI:246422"/>
        <note>ligand shared between dimeric partners</note>
    </ligand>
</feature>
<feature type="binding site" evidence="1">
    <location>
        <position position="263"/>
    </location>
    <ligand>
        <name>(6R)-5,10-methylene-5,6,7,8-tetrahydrofolate</name>
        <dbReference type="ChEBI" id="CHEBI:15636"/>
    </ligand>
</feature>
<keyword id="KW-0963">Cytoplasm</keyword>
<keyword id="KW-0489">Methyltransferase</keyword>
<keyword id="KW-0545">Nucleotide biosynthesis</keyword>
<keyword id="KW-0808">Transferase</keyword>
<sequence>MKSYLALLSHVLNQGIDRTDRTGVGTRSIFGYQMRFDLQAGFPLLTTKKLHLRSIIYELLWFLKGDTNIAWLKEHGVSIWDEWADKQGNLGPVYGYQWRSWPAPDGRHIDQIDNLLRMIKEKPDSRRLIVSAWNPALIEEMALPPCHCLFQFYIDEGKLSCQLYQRSADIFLGVPFNIASYALLTMMIAQVSGLKVGDFIHTFGDAHLYSNHFEQAQYQLSRIPNALPCMRINPAVTDLFSFKFEDFELLNYEAHPHIKAPVAI</sequence>
<reference key="1">
    <citation type="journal article" date="2007" name="Nat. Genet.">
        <title>Genomic analysis of Bartonella identifies type IV secretion systems as host adaptability factors.</title>
        <authorList>
            <person name="Saenz H.L."/>
            <person name="Engel P."/>
            <person name="Stoeckli M.C."/>
            <person name="Lanz C."/>
            <person name="Raddatz G."/>
            <person name="Vayssier-Taussat M."/>
            <person name="Birtles R."/>
            <person name="Schuster S.C."/>
            <person name="Dehio C."/>
        </authorList>
    </citation>
    <scope>NUCLEOTIDE SEQUENCE [LARGE SCALE GENOMIC DNA]</scope>
    <source>
        <strain>CIP 105476 / IBS 506</strain>
    </source>
</reference>
<evidence type="ECO:0000255" key="1">
    <source>
        <dbReference type="HAMAP-Rule" id="MF_00008"/>
    </source>
</evidence>
<accession>A9IW82</accession>
<name>TYSY_BART1</name>
<dbReference type="EC" id="2.1.1.45" evidence="1"/>
<dbReference type="EMBL" id="AM260525">
    <property type="protein sequence ID" value="CAK01907.1"/>
    <property type="molecule type" value="Genomic_DNA"/>
</dbReference>
<dbReference type="RefSeq" id="WP_012232033.1">
    <property type="nucleotide sequence ID" value="NC_010161.1"/>
</dbReference>
<dbReference type="SMR" id="A9IW82"/>
<dbReference type="KEGG" id="btr:BT_1568"/>
<dbReference type="eggNOG" id="COG0207">
    <property type="taxonomic scope" value="Bacteria"/>
</dbReference>
<dbReference type="HOGENOM" id="CLU_021669_0_0_5"/>
<dbReference type="UniPathway" id="UPA00575"/>
<dbReference type="Proteomes" id="UP000001592">
    <property type="component" value="Chromosome"/>
</dbReference>
<dbReference type="GO" id="GO:0005829">
    <property type="term" value="C:cytosol"/>
    <property type="evidence" value="ECO:0007669"/>
    <property type="project" value="TreeGrafter"/>
</dbReference>
<dbReference type="GO" id="GO:0004799">
    <property type="term" value="F:thymidylate synthase activity"/>
    <property type="evidence" value="ECO:0007669"/>
    <property type="project" value="UniProtKB-UniRule"/>
</dbReference>
<dbReference type="GO" id="GO:0006231">
    <property type="term" value="P:dTMP biosynthetic process"/>
    <property type="evidence" value="ECO:0007669"/>
    <property type="project" value="UniProtKB-UniRule"/>
</dbReference>
<dbReference type="GO" id="GO:0006235">
    <property type="term" value="P:dTTP biosynthetic process"/>
    <property type="evidence" value="ECO:0007669"/>
    <property type="project" value="UniProtKB-UniRule"/>
</dbReference>
<dbReference type="GO" id="GO:0032259">
    <property type="term" value="P:methylation"/>
    <property type="evidence" value="ECO:0007669"/>
    <property type="project" value="UniProtKB-KW"/>
</dbReference>
<dbReference type="CDD" id="cd00351">
    <property type="entry name" value="TS_Pyrimidine_HMase"/>
    <property type="match status" value="1"/>
</dbReference>
<dbReference type="FunFam" id="3.30.572.10:FF:000001">
    <property type="entry name" value="Thymidylate synthase"/>
    <property type="match status" value="1"/>
</dbReference>
<dbReference type="Gene3D" id="3.30.572.10">
    <property type="entry name" value="Thymidylate synthase/dCMP hydroxymethylase domain"/>
    <property type="match status" value="1"/>
</dbReference>
<dbReference type="HAMAP" id="MF_00008">
    <property type="entry name" value="Thymidy_synth_bact"/>
    <property type="match status" value="1"/>
</dbReference>
<dbReference type="InterPro" id="IPR045097">
    <property type="entry name" value="Thymidate_synth/dCMP_Mease"/>
</dbReference>
<dbReference type="InterPro" id="IPR023451">
    <property type="entry name" value="Thymidate_synth/dCMP_Mease_dom"/>
</dbReference>
<dbReference type="InterPro" id="IPR036926">
    <property type="entry name" value="Thymidate_synth/dCMP_Mease_sf"/>
</dbReference>
<dbReference type="InterPro" id="IPR000398">
    <property type="entry name" value="Thymidylate_synthase"/>
</dbReference>
<dbReference type="NCBIfam" id="NF002497">
    <property type="entry name" value="PRK01827.1-3"/>
    <property type="match status" value="1"/>
</dbReference>
<dbReference type="NCBIfam" id="NF002499">
    <property type="entry name" value="PRK01827.1-5"/>
    <property type="match status" value="1"/>
</dbReference>
<dbReference type="NCBIfam" id="TIGR03284">
    <property type="entry name" value="thym_sym"/>
    <property type="match status" value="2"/>
</dbReference>
<dbReference type="PANTHER" id="PTHR11548:SF9">
    <property type="entry name" value="THYMIDYLATE SYNTHASE"/>
    <property type="match status" value="1"/>
</dbReference>
<dbReference type="PANTHER" id="PTHR11548">
    <property type="entry name" value="THYMIDYLATE SYNTHASE 1"/>
    <property type="match status" value="1"/>
</dbReference>
<dbReference type="Pfam" id="PF00303">
    <property type="entry name" value="Thymidylat_synt"/>
    <property type="match status" value="1"/>
</dbReference>
<dbReference type="PRINTS" id="PR00108">
    <property type="entry name" value="THYMDSNTHASE"/>
</dbReference>
<dbReference type="SUPFAM" id="SSF55831">
    <property type="entry name" value="Thymidylate synthase/dCMP hydroxymethylase"/>
    <property type="match status" value="1"/>
</dbReference>
<protein>
    <recommendedName>
        <fullName evidence="1">Thymidylate synthase</fullName>
        <shortName evidence="1">TS</shortName>
        <shortName evidence="1">TSase</shortName>
        <ecNumber evidence="1">2.1.1.45</ecNumber>
    </recommendedName>
</protein>